<organism>
    <name type="scientific">Salmonella heidelberg (strain SL476)</name>
    <dbReference type="NCBI Taxonomy" id="454169"/>
    <lineage>
        <taxon>Bacteria</taxon>
        <taxon>Pseudomonadati</taxon>
        <taxon>Pseudomonadota</taxon>
        <taxon>Gammaproteobacteria</taxon>
        <taxon>Enterobacterales</taxon>
        <taxon>Enterobacteriaceae</taxon>
        <taxon>Salmonella</taxon>
    </lineage>
</organism>
<name>EFG_SALHS</name>
<accession>B4TKM1</accession>
<dbReference type="EMBL" id="CP001120">
    <property type="protein sequence ID" value="ACF68078.1"/>
    <property type="molecule type" value="Genomic_DNA"/>
</dbReference>
<dbReference type="RefSeq" id="WP_000124693.1">
    <property type="nucleotide sequence ID" value="NC_011083.1"/>
</dbReference>
<dbReference type="SMR" id="B4TKM1"/>
<dbReference type="KEGG" id="seh:SeHA_C3751"/>
<dbReference type="HOGENOM" id="CLU_002794_4_1_6"/>
<dbReference type="Proteomes" id="UP000001866">
    <property type="component" value="Chromosome"/>
</dbReference>
<dbReference type="GO" id="GO:0005737">
    <property type="term" value="C:cytoplasm"/>
    <property type="evidence" value="ECO:0007669"/>
    <property type="project" value="UniProtKB-SubCell"/>
</dbReference>
<dbReference type="GO" id="GO:0005525">
    <property type="term" value="F:GTP binding"/>
    <property type="evidence" value="ECO:0007669"/>
    <property type="project" value="UniProtKB-UniRule"/>
</dbReference>
<dbReference type="GO" id="GO:0003924">
    <property type="term" value="F:GTPase activity"/>
    <property type="evidence" value="ECO:0007669"/>
    <property type="project" value="InterPro"/>
</dbReference>
<dbReference type="GO" id="GO:0097216">
    <property type="term" value="F:guanosine tetraphosphate binding"/>
    <property type="evidence" value="ECO:0007669"/>
    <property type="project" value="UniProtKB-ARBA"/>
</dbReference>
<dbReference type="GO" id="GO:0003746">
    <property type="term" value="F:translation elongation factor activity"/>
    <property type="evidence" value="ECO:0007669"/>
    <property type="project" value="UniProtKB-UniRule"/>
</dbReference>
<dbReference type="GO" id="GO:0032790">
    <property type="term" value="P:ribosome disassembly"/>
    <property type="evidence" value="ECO:0007669"/>
    <property type="project" value="TreeGrafter"/>
</dbReference>
<dbReference type="CDD" id="cd01886">
    <property type="entry name" value="EF-G"/>
    <property type="match status" value="1"/>
</dbReference>
<dbReference type="CDD" id="cd16262">
    <property type="entry name" value="EFG_III"/>
    <property type="match status" value="1"/>
</dbReference>
<dbReference type="CDD" id="cd01434">
    <property type="entry name" value="EFG_mtEFG1_IV"/>
    <property type="match status" value="1"/>
</dbReference>
<dbReference type="CDD" id="cd03713">
    <property type="entry name" value="EFG_mtEFG_C"/>
    <property type="match status" value="1"/>
</dbReference>
<dbReference type="CDD" id="cd04088">
    <property type="entry name" value="EFG_mtEFG_II"/>
    <property type="match status" value="1"/>
</dbReference>
<dbReference type="FunFam" id="2.40.30.10:FF:000006">
    <property type="entry name" value="Elongation factor G"/>
    <property type="match status" value="1"/>
</dbReference>
<dbReference type="FunFam" id="3.30.230.10:FF:000003">
    <property type="entry name" value="Elongation factor G"/>
    <property type="match status" value="1"/>
</dbReference>
<dbReference type="FunFam" id="3.30.70.240:FF:000001">
    <property type="entry name" value="Elongation factor G"/>
    <property type="match status" value="1"/>
</dbReference>
<dbReference type="FunFam" id="3.30.70.870:FF:000001">
    <property type="entry name" value="Elongation factor G"/>
    <property type="match status" value="1"/>
</dbReference>
<dbReference type="FunFam" id="3.40.50.300:FF:000029">
    <property type="entry name" value="Elongation factor G"/>
    <property type="match status" value="1"/>
</dbReference>
<dbReference type="Gene3D" id="3.30.230.10">
    <property type="match status" value="1"/>
</dbReference>
<dbReference type="Gene3D" id="3.30.70.240">
    <property type="match status" value="1"/>
</dbReference>
<dbReference type="Gene3D" id="3.30.70.870">
    <property type="entry name" value="Elongation Factor G (Translational Gtpase), domain 3"/>
    <property type="match status" value="1"/>
</dbReference>
<dbReference type="Gene3D" id="3.40.50.300">
    <property type="entry name" value="P-loop containing nucleotide triphosphate hydrolases"/>
    <property type="match status" value="1"/>
</dbReference>
<dbReference type="Gene3D" id="2.40.30.10">
    <property type="entry name" value="Translation factors"/>
    <property type="match status" value="1"/>
</dbReference>
<dbReference type="HAMAP" id="MF_00054_B">
    <property type="entry name" value="EF_G_EF_2_B"/>
    <property type="match status" value="1"/>
</dbReference>
<dbReference type="InterPro" id="IPR041095">
    <property type="entry name" value="EFG_II"/>
</dbReference>
<dbReference type="InterPro" id="IPR009022">
    <property type="entry name" value="EFG_III"/>
</dbReference>
<dbReference type="InterPro" id="IPR035647">
    <property type="entry name" value="EFG_III/V"/>
</dbReference>
<dbReference type="InterPro" id="IPR047872">
    <property type="entry name" value="EFG_IV"/>
</dbReference>
<dbReference type="InterPro" id="IPR035649">
    <property type="entry name" value="EFG_V"/>
</dbReference>
<dbReference type="InterPro" id="IPR000640">
    <property type="entry name" value="EFG_V-like"/>
</dbReference>
<dbReference type="InterPro" id="IPR004161">
    <property type="entry name" value="EFTu-like_2"/>
</dbReference>
<dbReference type="InterPro" id="IPR031157">
    <property type="entry name" value="G_TR_CS"/>
</dbReference>
<dbReference type="InterPro" id="IPR027417">
    <property type="entry name" value="P-loop_NTPase"/>
</dbReference>
<dbReference type="InterPro" id="IPR020568">
    <property type="entry name" value="Ribosomal_Su5_D2-typ_SF"/>
</dbReference>
<dbReference type="InterPro" id="IPR014721">
    <property type="entry name" value="Ribsml_uS5_D2-typ_fold_subgr"/>
</dbReference>
<dbReference type="InterPro" id="IPR005225">
    <property type="entry name" value="Small_GTP-bd"/>
</dbReference>
<dbReference type="InterPro" id="IPR000795">
    <property type="entry name" value="T_Tr_GTP-bd_dom"/>
</dbReference>
<dbReference type="InterPro" id="IPR009000">
    <property type="entry name" value="Transl_B-barrel_sf"/>
</dbReference>
<dbReference type="InterPro" id="IPR004540">
    <property type="entry name" value="Transl_elong_EFG/EF2"/>
</dbReference>
<dbReference type="InterPro" id="IPR005517">
    <property type="entry name" value="Transl_elong_EFG/EF2_IV"/>
</dbReference>
<dbReference type="NCBIfam" id="TIGR00484">
    <property type="entry name" value="EF-G"/>
    <property type="match status" value="1"/>
</dbReference>
<dbReference type="NCBIfam" id="NF009381">
    <property type="entry name" value="PRK12740.1-5"/>
    <property type="match status" value="1"/>
</dbReference>
<dbReference type="NCBIfam" id="TIGR00231">
    <property type="entry name" value="small_GTP"/>
    <property type="match status" value="1"/>
</dbReference>
<dbReference type="PANTHER" id="PTHR43261:SF1">
    <property type="entry name" value="RIBOSOME-RELEASING FACTOR 2, MITOCHONDRIAL"/>
    <property type="match status" value="1"/>
</dbReference>
<dbReference type="PANTHER" id="PTHR43261">
    <property type="entry name" value="TRANSLATION ELONGATION FACTOR G-RELATED"/>
    <property type="match status" value="1"/>
</dbReference>
<dbReference type="Pfam" id="PF00679">
    <property type="entry name" value="EFG_C"/>
    <property type="match status" value="1"/>
</dbReference>
<dbReference type="Pfam" id="PF14492">
    <property type="entry name" value="EFG_III"/>
    <property type="match status" value="1"/>
</dbReference>
<dbReference type="Pfam" id="PF03764">
    <property type="entry name" value="EFG_IV"/>
    <property type="match status" value="1"/>
</dbReference>
<dbReference type="Pfam" id="PF00009">
    <property type="entry name" value="GTP_EFTU"/>
    <property type="match status" value="1"/>
</dbReference>
<dbReference type="Pfam" id="PF03144">
    <property type="entry name" value="GTP_EFTU_D2"/>
    <property type="match status" value="1"/>
</dbReference>
<dbReference type="PRINTS" id="PR00315">
    <property type="entry name" value="ELONGATNFCT"/>
</dbReference>
<dbReference type="SMART" id="SM00838">
    <property type="entry name" value="EFG_C"/>
    <property type="match status" value="1"/>
</dbReference>
<dbReference type="SMART" id="SM00889">
    <property type="entry name" value="EFG_IV"/>
    <property type="match status" value="1"/>
</dbReference>
<dbReference type="SUPFAM" id="SSF54980">
    <property type="entry name" value="EF-G C-terminal domain-like"/>
    <property type="match status" value="2"/>
</dbReference>
<dbReference type="SUPFAM" id="SSF52540">
    <property type="entry name" value="P-loop containing nucleoside triphosphate hydrolases"/>
    <property type="match status" value="1"/>
</dbReference>
<dbReference type="SUPFAM" id="SSF54211">
    <property type="entry name" value="Ribosomal protein S5 domain 2-like"/>
    <property type="match status" value="1"/>
</dbReference>
<dbReference type="SUPFAM" id="SSF50447">
    <property type="entry name" value="Translation proteins"/>
    <property type="match status" value="1"/>
</dbReference>
<dbReference type="PROSITE" id="PS00301">
    <property type="entry name" value="G_TR_1"/>
    <property type="match status" value="1"/>
</dbReference>
<dbReference type="PROSITE" id="PS51722">
    <property type="entry name" value="G_TR_2"/>
    <property type="match status" value="1"/>
</dbReference>
<protein>
    <recommendedName>
        <fullName evidence="1">Elongation factor G</fullName>
        <shortName evidence="1">EF-G</shortName>
    </recommendedName>
</protein>
<evidence type="ECO:0000255" key="1">
    <source>
        <dbReference type="HAMAP-Rule" id="MF_00054"/>
    </source>
</evidence>
<keyword id="KW-0963">Cytoplasm</keyword>
<keyword id="KW-0251">Elongation factor</keyword>
<keyword id="KW-0342">GTP-binding</keyword>
<keyword id="KW-0547">Nucleotide-binding</keyword>
<keyword id="KW-0648">Protein biosynthesis</keyword>
<gene>
    <name evidence="1" type="primary">fusA</name>
    <name type="ordered locus">SeHA_C3751</name>
</gene>
<reference key="1">
    <citation type="journal article" date="2011" name="J. Bacteriol.">
        <title>Comparative genomics of 28 Salmonella enterica isolates: evidence for CRISPR-mediated adaptive sublineage evolution.</title>
        <authorList>
            <person name="Fricke W.F."/>
            <person name="Mammel M.K."/>
            <person name="McDermott P.F."/>
            <person name="Tartera C."/>
            <person name="White D.G."/>
            <person name="Leclerc J.E."/>
            <person name="Ravel J."/>
            <person name="Cebula T.A."/>
        </authorList>
    </citation>
    <scope>NUCLEOTIDE SEQUENCE [LARGE SCALE GENOMIC DNA]</scope>
    <source>
        <strain>SL476</strain>
    </source>
</reference>
<feature type="chain" id="PRO_1000091758" description="Elongation factor G">
    <location>
        <begin position="1"/>
        <end position="704"/>
    </location>
</feature>
<feature type="domain" description="tr-type G">
    <location>
        <begin position="8"/>
        <end position="290"/>
    </location>
</feature>
<feature type="binding site" evidence="1">
    <location>
        <begin position="17"/>
        <end position="24"/>
    </location>
    <ligand>
        <name>GTP</name>
        <dbReference type="ChEBI" id="CHEBI:37565"/>
    </ligand>
</feature>
<feature type="binding site" evidence="1">
    <location>
        <begin position="88"/>
        <end position="92"/>
    </location>
    <ligand>
        <name>GTP</name>
        <dbReference type="ChEBI" id="CHEBI:37565"/>
    </ligand>
</feature>
<feature type="binding site" evidence="1">
    <location>
        <begin position="142"/>
        <end position="145"/>
    </location>
    <ligand>
        <name>GTP</name>
        <dbReference type="ChEBI" id="CHEBI:37565"/>
    </ligand>
</feature>
<proteinExistence type="inferred from homology"/>
<sequence>MARTTPIARYRNIGISAHIDAGKTTTTERILFYTGVNHKIGEVHDGAATMDWMEQEQERGITITSAATTAFWSGMAKQYEPHRINIIDTPGHVDFTIEVERSMRVLDGAVMVYCAVGGVQPQSETVWRQANKYKVPRIAFVNKMDRMGANFLKVVGQIKTRLGANPVPLQLAIGAEEGFTGVVDLVKMKAINWNDADQGVTFEYEDIPADMQDLANEWHQNLIESAAEASEELMEKYLGGEELTEEEIKQALRQRVLNNEIILVTCGSAFKNKGVQAMLDAVIDYLPSPVDVPAINGILDDGKDTPAERHASDDEPFSALAFKIATDPFVGNLTFFRVYSGVVNSGDTVLNSVKTARERFGRIVQMHANKREEIKEVRAGDIAAAIGLKDVTTGDTLCDPENPIILERMEFPEPVISIAVEPKTKADQEKMGLALGRLAKEDPSFRVWTDEESNQTIIAGMGELHLDIIVDRMKREFNVEANVGKPQVAYREAIRAKVTDIEGKHAKQSGGRGQYGHVVIDMYPLEPGSNPKGYEFINDIKGGVIPGEYIPAVDKGIQEQLKSGPLAGYPVVDLGVRLHFGSYHDVDSSELAFKLAASIAFKEGFKKAKPVLLEPIMKVEVETPEENTGDVIGDLSRRRGMLKGQESEVTGVKIHAEVPLSEMFGYATQLRSLTKGRASYTMEFLKYDDAPNNVAQAVIEARGK</sequence>
<comment type="function">
    <text evidence="1">Catalyzes the GTP-dependent ribosomal translocation step during translation elongation. During this step, the ribosome changes from the pre-translocational (PRE) to the post-translocational (POST) state as the newly formed A-site-bound peptidyl-tRNA and P-site-bound deacylated tRNA move to the P and E sites, respectively. Catalyzes the coordinated movement of the two tRNA molecules, the mRNA and conformational changes in the ribosome.</text>
</comment>
<comment type="subcellular location">
    <subcellularLocation>
        <location evidence="1">Cytoplasm</location>
    </subcellularLocation>
</comment>
<comment type="similarity">
    <text evidence="1">Belongs to the TRAFAC class translation factor GTPase superfamily. Classic translation factor GTPase family. EF-G/EF-2 subfamily.</text>
</comment>